<name>PURR_PECAS</name>
<dbReference type="EMBL" id="BX950851">
    <property type="protein sequence ID" value="CAG74828.1"/>
    <property type="molecule type" value="Genomic_DNA"/>
</dbReference>
<dbReference type="RefSeq" id="WP_011093493.1">
    <property type="nucleotide sequence ID" value="NC_004547.2"/>
</dbReference>
<dbReference type="SMR" id="Q6D5W3"/>
<dbReference type="STRING" id="218491.ECA1925"/>
<dbReference type="GeneID" id="57209369"/>
<dbReference type="KEGG" id="eca:ECA1925"/>
<dbReference type="PATRIC" id="fig|218491.5.peg.1957"/>
<dbReference type="eggNOG" id="COG1609">
    <property type="taxonomic scope" value="Bacteria"/>
</dbReference>
<dbReference type="HOGENOM" id="CLU_037628_6_2_6"/>
<dbReference type="OrthoDB" id="9798934at2"/>
<dbReference type="UniPathway" id="UPA00488"/>
<dbReference type="Proteomes" id="UP000007966">
    <property type="component" value="Chromosome"/>
</dbReference>
<dbReference type="GO" id="GO:0003700">
    <property type="term" value="F:DNA-binding transcription factor activity"/>
    <property type="evidence" value="ECO:0007669"/>
    <property type="project" value="TreeGrafter"/>
</dbReference>
<dbReference type="GO" id="GO:0000976">
    <property type="term" value="F:transcription cis-regulatory region binding"/>
    <property type="evidence" value="ECO:0007669"/>
    <property type="project" value="TreeGrafter"/>
</dbReference>
<dbReference type="GO" id="GO:0045892">
    <property type="term" value="P:negative regulation of DNA-templated transcription"/>
    <property type="evidence" value="ECO:0007669"/>
    <property type="project" value="UniProtKB-UniRule"/>
</dbReference>
<dbReference type="GO" id="GO:0006164">
    <property type="term" value="P:purine nucleotide biosynthetic process"/>
    <property type="evidence" value="ECO:0007669"/>
    <property type="project" value="UniProtKB-UniPathway"/>
</dbReference>
<dbReference type="CDD" id="cd01392">
    <property type="entry name" value="HTH_LacI"/>
    <property type="match status" value="1"/>
</dbReference>
<dbReference type="CDD" id="cd06275">
    <property type="entry name" value="PBP1_PurR"/>
    <property type="match status" value="1"/>
</dbReference>
<dbReference type="FunFam" id="1.10.260.40:FF:000002">
    <property type="entry name" value="HTH-type transcriptional repressor PurR"/>
    <property type="match status" value="1"/>
</dbReference>
<dbReference type="FunFam" id="3.40.50.2300:FF:000045">
    <property type="entry name" value="HTH-type transcriptional repressor PurR"/>
    <property type="match status" value="1"/>
</dbReference>
<dbReference type="Gene3D" id="3.40.50.2300">
    <property type="match status" value="2"/>
</dbReference>
<dbReference type="Gene3D" id="1.10.260.40">
    <property type="entry name" value="lambda repressor-like DNA-binding domains"/>
    <property type="match status" value="1"/>
</dbReference>
<dbReference type="HAMAP" id="MF_01277">
    <property type="entry name" value="HTH_type_PurR"/>
    <property type="match status" value="1"/>
</dbReference>
<dbReference type="InterPro" id="IPR000843">
    <property type="entry name" value="HTH_LacI"/>
</dbReference>
<dbReference type="InterPro" id="IPR046335">
    <property type="entry name" value="LacI/GalR-like_sensor"/>
</dbReference>
<dbReference type="InterPro" id="IPR010982">
    <property type="entry name" value="Lambda_DNA-bd_dom_sf"/>
</dbReference>
<dbReference type="InterPro" id="IPR028082">
    <property type="entry name" value="Peripla_BP_I"/>
</dbReference>
<dbReference type="InterPro" id="IPR023588">
    <property type="entry name" value="Tscrpt_reg_HTH_PurR"/>
</dbReference>
<dbReference type="NCBIfam" id="NF007979">
    <property type="entry name" value="PRK10703.1"/>
    <property type="match status" value="1"/>
</dbReference>
<dbReference type="PANTHER" id="PTHR30146:SF148">
    <property type="entry name" value="HTH-TYPE TRANSCRIPTIONAL REPRESSOR PURR-RELATED"/>
    <property type="match status" value="1"/>
</dbReference>
<dbReference type="PANTHER" id="PTHR30146">
    <property type="entry name" value="LACI-RELATED TRANSCRIPTIONAL REPRESSOR"/>
    <property type="match status" value="1"/>
</dbReference>
<dbReference type="Pfam" id="PF00356">
    <property type="entry name" value="LacI"/>
    <property type="match status" value="1"/>
</dbReference>
<dbReference type="Pfam" id="PF13377">
    <property type="entry name" value="Peripla_BP_3"/>
    <property type="match status" value="1"/>
</dbReference>
<dbReference type="PRINTS" id="PR00036">
    <property type="entry name" value="HTHLACI"/>
</dbReference>
<dbReference type="SMART" id="SM00354">
    <property type="entry name" value="HTH_LACI"/>
    <property type="match status" value="1"/>
</dbReference>
<dbReference type="SUPFAM" id="SSF47413">
    <property type="entry name" value="lambda repressor-like DNA-binding domains"/>
    <property type="match status" value="1"/>
</dbReference>
<dbReference type="SUPFAM" id="SSF53822">
    <property type="entry name" value="Periplasmic binding protein-like I"/>
    <property type="match status" value="1"/>
</dbReference>
<dbReference type="PROSITE" id="PS00356">
    <property type="entry name" value="HTH_LACI_1"/>
    <property type="match status" value="1"/>
</dbReference>
<dbReference type="PROSITE" id="PS50932">
    <property type="entry name" value="HTH_LACI_2"/>
    <property type="match status" value="1"/>
</dbReference>
<organism>
    <name type="scientific">Pectobacterium atrosepticum (strain SCRI 1043 / ATCC BAA-672)</name>
    <name type="common">Erwinia carotovora subsp. atroseptica</name>
    <dbReference type="NCBI Taxonomy" id="218491"/>
    <lineage>
        <taxon>Bacteria</taxon>
        <taxon>Pseudomonadati</taxon>
        <taxon>Pseudomonadota</taxon>
        <taxon>Gammaproteobacteria</taxon>
        <taxon>Enterobacterales</taxon>
        <taxon>Pectobacteriaceae</taxon>
        <taxon>Pectobacterium</taxon>
    </lineage>
</organism>
<reference key="1">
    <citation type="journal article" date="2004" name="Proc. Natl. Acad. Sci. U.S.A.">
        <title>Genome sequence of the enterobacterial phytopathogen Erwinia carotovora subsp. atroseptica and characterization of virulence factors.</title>
        <authorList>
            <person name="Bell K.S."/>
            <person name="Sebaihia M."/>
            <person name="Pritchard L."/>
            <person name="Holden M.T.G."/>
            <person name="Hyman L.J."/>
            <person name="Holeva M.C."/>
            <person name="Thomson N.R."/>
            <person name="Bentley S.D."/>
            <person name="Churcher L.J.C."/>
            <person name="Mungall K."/>
            <person name="Atkin R."/>
            <person name="Bason N."/>
            <person name="Brooks K."/>
            <person name="Chillingworth T."/>
            <person name="Clark K."/>
            <person name="Doggett J."/>
            <person name="Fraser A."/>
            <person name="Hance Z."/>
            <person name="Hauser H."/>
            <person name="Jagels K."/>
            <person name="Moule S."/>
            <person name="Norbertczak H."/>
            <person name="Ormond D."/>
            <person name="Price C."/>
            <person name="Quail M.A."/>
            <person name="Sanders M."/>
            <person name="Walker D."/>
            <person name="Whitehead S."/>
            <person name="Salmond G.P.C."/>
            <person name="Birch P.R.J."/>
            <person name="Parkhill J."/>
            <person name="Toth I.K."/>
        </authorList>
    </citation>
    <scope>NUCLEOTIDE SEQUENCE [LARGE SCALE GENOMIC DNA]</scope>
    <source>
        <strain>SCRI 1043 / ATCC BAA-672</strain>
    </source>
</reference>
<sequence>MATIKDVAKRAGVSTTTVSHVINKTRFVAEETKAAVRAAIKELHYSPSAVARSLKVNHTKSIGLLATSSEAPYFAEIIEAVENSCYAKGYTLVLCNSHNDIGKQRAYLSMLAQKRVDGLLVMCAEYPPELLGMLEDYRSIPMVVMDWGQMHNDFTDTIIDNAFEGGYMAGRYLIERGHRDIGAIPGIQERNTGSGRYLGFLKALKEADITVRNEWVVQGDFEPESGYKAMHQILAQKQRPTAVFCGGDIMAMGAICAADELGLRVPQDISVIGYDNVRHARFFTPALTTIHQPKERLGQSAFSMLLDRITSKREDAHVIEVHPTLIERRSVADGPFRDYRR</sequence>
<feature type="chain" id="PRO_0000279654" description="HTH-type transcriptional repressor PurR">
    <location>
        <begin position="1"/>
        <end position="341"/>
    </location>
</feature>
<feature type="domain" description="HTH lacI-type" evidence="1">
    <location>
        <begin position="2"/>
        <end position="56"/>
    </location>
</feature>
<feature type="DNA-binding region" description="H-T-H motif" evidence="1">
    <location>
        <begin position="4"/>
        <end position="23"/>
    </location>
</feature>
<feature type="DNA-binding region" evidence="1">
    <location>
        <begin position="48"/>
        <end position="56"/>
    </location>
</feature>
<feature type="binding site" evidence="1">
    <location>
        <position position="73"/>
    </location>
    <ligand>
        <name>hypoxanthine</name>
        <dbReference type="ChEBI" id="CHEBI:17368"/>
    </ligand>
</feature>
<feature type="binding site" evidence="1">
    <location>
        <position position="190"/>
    </location>
    <ligand>
        <name>hypoxanthine</name>
        <dbReference type="ChEBI" id="CHEBI:17368"/>
    </ligand>
</feature>
<feature type="binding site" evidence="1">
    <location>
        <position position="192"/>
    </location>
    <ligand>
        <name>hypoxanthine</name>
        <dbReference type="ChEBI" id="CHEBI:17368"/>
    </ligand>
</feature>
<feature type="binding site" evidence="1">
    <location>
        <position position="221"/>
    </location>
    <ligand>
        <name>hypoxanthine</name>
        <dbReference type="ChEBI" id="CHEBI:17368"/>
    </ligand>
</feature>
<feature type="binding site" evidence="1">
    <location>
        <position position="275"/>
    </location>
    <ligand>
        <name>hypoxanthine</name>
        <dbReference type="ChEBI" id="CHEBI:17368"/>
    </ligand>
</feature>
<accession>Q6D5W3</accession>
<evidence type="ECO:0000255" key="1">
    <source>
        <dbReference type="HAMAP-Rule" id="MF_01277"/>
    </source>
</evidence>
<keyword id="KW-0238">DNA-binding</keyword>
<keyword id="KW-0658">Purine biosynthesis</keyword>
<keyword id="KW-1185">Reference proteome</keyword>
<keyword id="KW-0678">Repressor</keyword>
<keyword id="KW-0804">Transcription</keyword>
<keyword id="KW-0805">Transcription regulation</keyword>
<comment type="function">
    <text evidence="1">Is the main repressor of the genes involved in the de novo synthesis of purine nucleotides, regulating purB, purC, purEK, purF, purHD, purL, purMN and guaBA expression. PurR is allosterically activated to bind its cognate DNA by binding the purine corepressors, hypoxanthine or guanine, thereby effecting transcription repression.</text>
</comment>
<comment type="pathway">
    <text>Purine metabolism; purine nucleotide biosynthesis [regulation].</text>
</comment>
<comment type="subunit">
    <text evidence="1">Homodimer.</text>
</comment>
<comment type="domain">
    <text evidence="1">Consists of two structural and functional domains: an N-terminal DNA-binding domain, approximately the first 60 residues, and a larger C-terminal domain, approximately 280 residues, which imparts the function of corepressor binding and oligomerization.</text>
</comment>
<protein>
    <recommendedName>
        <fullName evidence="1">HTH-type transcriptional repressor PurR</fullName>
    </recommendedName>
    <alternativeName>
        <fullName evidence="1">Pur regulon repressor</fullName>
    </alternativeName>
    <alternativeName>
        <fullName evidence="1">Purine nucleotide synthesis repressor</fullName>
    </alternativeName>
</protein>
<gene>
    <name evidence="1" type="primary">purR</name>
    <name type="ordered locus">ECA1925</name>
</gene>
<proteinExistence type="inferred from homology"/>